<sequence length="79" mass="8995">MDTKQGVLDILNDLTGEDLSDQMDENIFDNGLMDSMASVQMLLSLQEKFDIDVPVSEFNREEWDTPNKIVAKVESLENE</sequence>
<organism>
    <name type="scientific">Lactobacillus acidophilus (strain ATCC 700396 / NCK56 / N2 / NCFM)</name>
    <dbReference type="NCBI Taxonomy" id="272621"/>
    <lineage>
        <taxon>Bacteria</taxon>
        <taxon>Bacillati</taxon>
        <taxon>Bacillota</taxon>
        <taxon>Bacilli</taxon>
        <taxon>Lactobacillales</taxon>
        <taxon>Lactobacillaceae</taxon>
        <taxon>Lactobacillus</taxon>
    </lineage>
</organism>
<reference key="1">
    <citation type="journal article" date="2005" name="Proc. Natl. Acad. Sci. U.S.A.">
        <title>Complete genome sequence of the probiotic lactic acid bacterium Lactobacillus acidophilus NCFM.</title>
        <authorList>
            <person name="Altermann E."/>
            <person name="Russell W.M."/>
            <person name="Azcarate-Peril M.A."/>
            <person name="Barrangou R."/>
            <person name="Buck B.L."/>
            <person name="McAuliffe O."/>
            <person name="Souther N."/>
            <person name="Dobson A."/>
            <person name="Duong T."/>
            <person name="Callanan M."/>
            <person name="Lick S."/>
            <person name="Hamrick A."/>
            <person name="Cano R."/>
            <person name="Klaenhammer T.R."/>
        </authorList>
    </citation>
    <scope>NUCLEOTIDE SEQUENCE [LARGE SCALE GENOMIC DNA]</scope>
    <source>
        <strain>ATCC 700396 / NCK56 / N2 / NCFM</strain>
    </source>
</reference>
<accession>Q5FHV3</accession>
<keyword id="KW-0961">Cell wall biogenesis/degradation</keyword>
<keyword id="KW-0963">Cytoplasm</keyword>
<keyword id="KW-0596">Phosphopantetheine</keyword>
<keyword id="KW-0597">Phosphoprotein</keyword>
<keyword id="KW-1185">Reference proteome</keyword>
<evidence type="ECO:0000255" key="1">
    <source>
        <dbReference type="HAMAP-Rule" id="MF_00565"/>
    </source>
</evidence>
<comment type="function">
    <text evidence="1">Carrier protein involved in the D-alanylation of lipoteichoic acid (LTA). The loading of thioester-linked D-alanine onto DltC is catalyzed by D-alanine--D-alanyl carrier protein ligase DltA. The DltC-carried D-alanyl group is further transferred to cell membrane phosphatidylglycerol (PG) by forming an ester bond, probably catalyzed by DltD. D-alanylation of LTA plays an important role in modulating the properties of the cell wall in Gram-positive bacteria, influencing the net charge of the cell wall.</text>
</comment>
<comment type="pathway">
    <text evidence="1">Cell wall biogenesis; lipoteichoic acid biosynthesis.</text>
</comment>
<comment type="subcellular location">
    <subcellularLocation>
        <location evidence="1">Cytoplasm</location>
    </subcellularLocation>
</comment>
<comment type="PTM">
    <text evidence="1">4'-phosphopantetheine is transferred from CoA to a specific serine of apo-DCP.</text>
</comment>
<comment type="similarity">
    <text evidence="1">Belongs to the DltC family.</text>
</comment>
<dbReference type="EMBL" id="CP000033">
    <property type="protein sequence ID" value="AAV43721.1"/>
    <property type="molecule type" value="Genomic_DNA"/>
</dbReference>
<dbReference type="RefSeq" id="WP_003549523.1">
    <property type="nucleotide sequence ID" value="NC_006814.3"/>
</dbReference>
<dbReference type="RefSeq" id="YP_194752.1">
    <property type="nucleotide sequence ID" value="NC_006814.3"/>
</dbReference>
<dbReference type="SMR" id="Q5FHV3"/>
<dbReference type="STRING" id="272621.LBA1924"/>
<dbReference type="GeneID" id="93290941"/>
<dbReference type="KEGG" id="lac:LBA1924"/>
<dbReference type="PATRIC" id="fig|272621.13.peg.1827"/>
<dbReference type="eggNOG" id="COG0236">
    <property type="taxonomic scope" value="Bacteria"/>
</dbReference>
<dbReference type="HOGENOM" id="CLU_108696_19_0_9"/>
<dbReference type="OrthoDB" id="6462171at2"/>
<dbReference type="BioCyc" id="LACI272621:G1G49-1877-MONOMER"/>
<dbReference type="UniPathway" id="UPA00556"/>
<dbReference type="Proteomes" id="UP000006381">
    <property type="component" value="Chromosome"/>
</dbReference>
<dbReference type="GO" id="GO:0005737">
    <property type="term" value="C:cytoplasm"/>
    <property type="evidence" value="ECO:0007669"/>
    <property type="project" value="UniProtKB-SubCell"/>
</dbReference>
<dbReference type="GO" id="GO:0036370">
    <property type="term" value="F:D-alanyl carrier activity"/>
    <property type="evidence" value="ECO:0007669"/>
    <property type="project" value="UniProtKB-UniRule"/>
</dbReference>
<dbReference type="GO" id="GO:0071555">
    <property type="term" value="P:cell wall organization"/>
    <property type="evidence" value="ECO:0007669"/>
    <property type="project" value="UniProtKB-KW"/>
</dbReference>
<dbReference type="GO" id="GO:0070395">
    <property type="term" value="P:lipoteichoic acid biosynthetic process"/>
    <property type="evidence" value="ECO:0007669"/>
    <property type="project" value="UniProtKB-UniRule"/>
</dbReference>
<dbReference type="Gene3D" id="1.10.1200.10">
    <property type="entry name" value="ACP-like"/>
    <property type="match status" value="1"/>
</dbReference>
<dbReference type="HAMAP" id="MF_00565">
    <property type="entry name" value="DltC"/>
    <property type="match status" value="1"/>
</dbReference>
<dbReference type="InterPro" id="IPR036736">
    <property type="entry name" value="ACP-like_sf"/>
</dbReference>
<dbReference type="InterPro" id="IPR003230">
    <property type="entry name" value="DltC"/>
</dbReference>
<dbReference type="InterPro" id="IPR009081">
    <property type="entry name" value="PP-bd_ACP"/>
</dbReference>
<dbReference type="NCBIfam" id="TIGR01688">
    <property type="entry name" value="dltC"/>
    <property type="match status" value="1"/>
</dbReference>
<dbReference type="NCBIfam" id="NF003464">
    <property type="entry name" value="PRK05087.1"/>
    <property type="match status" value="1"/>
</dbReference>
<dbReference type="Pfam" id="PF00550">
    <property type="entry name" value="PP-binding"/>
    <property type="match status" value="1"/>
</dbReference>
<dbReference type="SUPFAM" id="SSF47336">
    <property type="entry name" value="ACP-like"/>
    <property type="match status" value="1"/>
</dbReference>
<dbReference type="PROSITE" id="PS50075">
    <property type="entry name" value="CARRIER"/>
    <property type="match status" value="1"/>
</dbReference>
<name>DLTC_LACAC</name>
<feature type="chain" id="PRO_1000024913" description="D-alanyl carrier protein">
    <location>
        <begin position="1"/>
        <end position="79"/>
    </location>
</feature>
<feature type="domain" description="Carrier" evidence="1">
    <location>
        <begin position="1"/>
        <end position="77"/>
    </location>
</feature>
<feature type="modified residue" description="O-(pantetheine 4'-phosphoryl)serine" evidence="1">
    <location>
        <position position="35"/>
    </location>
</feature>
<gene>
    <name evidence="1" type="primary">dltC</name>
    <name type="ordered locus">LBA1924</name>
</gene>
<proteinExistence type="inferred from homology"/>
<protein>
    <recommendedName>
        <fullName evidence="1">D-alanyl carrier protein</fullName>
        <shortName evidence="1">DCP</shortName>
    </recommendedName>
    <alternativeName>
        <fullName evidence="1">D-alanine--poly(phosphoribitol) ligase subunit 2</fullName>
    </alternativeName>
</protein>